<proteinExistence type="inferred from homology"/>
<gene>
    <name type="ORF">SPCC777.12c</name>
</gene>
<name>YCVC_SCHPO</name>
<protein>
    <recommendedName>
        <fullName>Uncharacterized protein C777.12c</fullName>
    </recommendedName>
</protein>
<sequence length="238" mass="26889">MKINLFFVFLFELLHFVAAYSCEGDESAAIEAMNVLQVPYEKYNTDPVCAFDNSTVVELSDKTWDHVIESGKWFVQLTAEGCANCTLGELLFNDLSHAFHEKYPDVHFARVYLSSSLELSVRLLISRIPSYYFIDNQNFYRVSPQVLPKNKAIALYEKDGFKSMKKEQGFFSVNGPLKSFYWVFGKALALYGHLSQKYTPLGMNVAIFGISAYIMYRSSKKAKQKQAAAAAAAAAKKK</sequence>
<keyword id="KW-0256">Endoplasmic reticulum</keyword>
<keyword id="KW-0472">Membrane</keyword>
<keyword id="KW-1185">Reference proteome</keyword>
<keyword id="KW-0732">Signal</keyword>
<keyword id="KW-0812">Transmembrane</keyword>
<keyword id="KW-1133">Transmembrane helix</keyword>
<comment type="subcellular location">
    <subcellularLocation>
        <location evidence="2">Endoplasmic reticulum membrane</location>
        <topology evidence="2">Single-pass membrane protein</topology>
    </subcellularLocation>
</comment>
<organism>
    <name type="scientific">Schizosaccharomyces pombe (strain 972 / ATCC 24843)</name>
    <name type="common">Fission yeast</name>
    <dbReference type="NCBI Taxonomy" id="284812"/>
    <lineage>
        <taxon>Eukaryota</taxon>
        <taxon>Fungi</taxon>
        <taxon>Dikarya</taxon>
        <taxon>Ascomycota</taxon>
        <taxon>Taphrinomycotina</taxon>
        <taxon>Schizosaccharomycetes</taxon>
        <taxon>Schizosaccharomycetales</taxon>
        <taxon>Schizosaccharomycetaceae</taxon>
        <taxon>Schizosaccharomyces</taxon>
    </lineage>
</organism>
<accession>O74551</accession>
<evidence type="ECO:0000255" key="1"/>
<evidence type="ECO:0000269" key="2">
    <source>
    </source>
</evidence>
<dbReference type="EMBL" id="CU329672">
    <property type="protein sequence ID" value="CAA20716.1"/>
    <property type="molecule type" value="Genomic_DNA"/>
</dbReference>
<dbReference type="PIR" id="T11718">
    <property type="entry name" value="T11718"/>
</dbReference>
<dbReference type="RefSeq" id="NP_588258.1">
    <property type="nucleotide sequence ID" value="NM_001023248.2"/>
</dbReference>
<dbReference type="SMR" id="O74551"/>
<dbReference type="BioGRID" id="275458">
    <property type="interactions" value="1"/>
</dbReference>
<dbReference type="STRING" id="284812.O74551"/>
<dbReference type="iPTMnet" id="O74551"/>
<dbReference type="PaxDb" id="4896-SPCC777.12c.1"/>
<dbReference type="EnsemblFungi" id="SPCC777.12c.1">
    <property type="protein sequence ID" value="SPCC777.12c.1:pep"/>
    <property type="gene ID" value="SPCC777.12c"/>
</dbReference>
<dbReference type="KEGG" id="spo:2538879"/>
<dbReference type="PomBase" id="SPCC777.12c"/>
<dbReference type="VEuPathDB" id="FungiDB:SPCC777.12c"/>
<dbReference type="HOGENOM" id="CLU_1176009_0_0_1"/>
<dbReference type="InParanoid" id="O74551"/>
<dbReference type="OMA" id="YFINGAN"/>
<dbReference type="PRO" id="PR:O74551"/>
<dbReference type="Proteomes" id="UP000002485">
    <property type="component" value="Chromosome III"/>
</dbReference>
<dbReference type="GO" id="GO:0005783">
    <property type="term" value="C:endoplasmic reticulum"/>
    <property type="evidence" value="ECO:0007005"/>
    <property type="project" value="PomBase"/>
</dbReference>
<dbReference type="GO" id="GO:0005789">
    <property type="term" value="C:endoplasmic reticulum membrane"/>
    <property type="evidence" value="ECO:0007669"/>
    <property type="project" value="UniProtKB-SubCell"/>
</dbReference>
<dbReference type="GO" id="GO:0015036">
    <property type="term" value="F:disulfide oxidoreductase activity"/>
    <property type="evidence" value="ECO:0000250"/>
    <property type="project" value="PomBase"/>
</dbReference>
<dbReference type="GO" id="GO:0034975">
    <property type="term" value="P:protein folding in endoplasmic reticulum"/>
    <property type="evidence" value="ECO:0000305"/>
    <property type="project" value="PomBase"/>
</dbReference>
<dbReference type="GO" id="GO:0034976">
    <property type="term" value="P:response to endoplasmic reticulum stress"/>
    <property type="evidence" value="ECO:0000250"/>
    <property type="project" value="PomBase"/>
</dbReference>
<dbReference type="Gene3D" id="3.40.30.10">
    <property type="entry name" value="Glutaredoxin"/>
    <property type="match status" value="1"/>
</dbReference>
<dbReference type="InterPro" id="IPR036249">
    <property type="entry name" value="Thioredoxin-like_sf"/>
</dbReference>
<dbReference type="SUPFAM" id="SSF52833">
    <property type="entry name" value="Thioredoxin-like"/>
    <property type="match status" value="1"/>
</dbReference>
<reference key="1">
    <citation type="journal article" date="2002" name="Nature">
        <title>The genome sequence of Schizosaccharomyces pombe.</title>
        <authorList>
            <person name="Wood V."/>
            <person name="Gwilliam R."/>
            <person name="Rajandream M.A."/>
            <person name="Lyne M.H."/>
            <person name="Lyne R."/>
            <person name="Stewart A."/>
            <person name="Sgouros J.G."/>
            <person name="Peat N."/>
            <person name="Hayles J."/>
            <person name="Baker S.G."/>
            <person name="Basham D."/>
            <person name="Bowman S."/>
            <person name="Brooks K."/>
            <person name="Brown D."/>
            <person name="Brown S."/>
            <person name="Chillingworth T."/>
            <person name="Churcher C.M."/>
            <person name="Collins M."/>
            <person name="Connor R."/>
            <person name="Cronin A."/>
            <person name="Davis P."/>
            <person name="Feltwell T."/>
            <person name="Fraser A."/>
            <person name="Gentles S."/>
            <person name="Goble A."/>
            <person name="Hamlin N."/>
            <person name="Harris D.E."/>
            <person name="Hidalgo J."/>
            <person name="Hodgson G."/>
            <person name="Holroyd S."/>
            <person name="Hornsby T."/>
            <person name="Howarth S."/>
            <person name="Huckle E.J."/>
            <person name="Hunt S."/>
            <person name="Jagels K."/>
            <person name="James K.D."/>
            <person name="Jones L."/>
            <person name="Jones M."/>
            <person name="Leather S."/>
            <person name="McDonald S."/>
            <person name="McLean J."/>
            <person name="Mooney P."/>
            <person name="Moule S."/>
            <person name="Mungall K.L."/>
            <person name="Murphy L.D."/>
            <person name="Niblett D."/>
            <person name="Odell C."/>
            <person name="Oliver K."/>
            <person name="O'Neil S."/>
            <person name="Pearson D."/>
            <person name="Quail M.A."/>
            <person name="Rabbinowitsch E."/>
            <person name="Rutherford K.M."/>
            <person name="Rutter S."/>
            <person name="Saunders D."/>
            <person name="Seeger K."/>
            <person name="Sharp S."/>
            <person name="Skelton J."/>
            <person name="Simmonds M.N."/>
            <person name="Squares R."/>
            <person name="Squares S."/>
            <person name="Stevens K."/>
            <person name="Taylor K."/>
            <person name="Taylor R.G."/>
            <person name="Tivey A."/>
            <person name="Walsh S.V."/>
            <person name="Warren T."/>
            <person name="Whitehead S."/>
            <person name="Woodward J.R."/>
            <person name="Volckaert G."/>
            <person name="Aert R."/>
            <person name="Robben J."/>
            <person name="Grymonprez B."/>
            <person name="Weltjens I."/>
            <person name="Vanstreels E."/>
            <person name="Rieger M."/>
            <person name="Schaefer M."/>
            <person name="Mueller-Auer S."/>
            <person name="Gabel C."/>
            <person name="Fuchs M."/>
            <person name="Duesterhoeft A."/>
            <person name="Fritzc C."/>
            <person name="Holzer E."/>
            <person name="Moestl D."/>
            <person name="Hilbert H."/>
            <person name="Borzym K."/>
            <person name="Langer I."/>
            <person name="Beck A."/>
            <person name="Lehrach H."/>
            <person name="Reinhardt R."/>
            <person name="Pohl T.M."/>
            <person name="Eger P."/>
            <person name="Zimmermann W."/>
            <person name="Wedler H."/>
            <person name="Wambutt R."/>
            <person name="Purnelle B."/>
            <person name="Goffeau A."/>
            <person name="Cadieu E."/>
            <person name="Dreano S."/>
            <person name="Gloux S."/>
            <person name="Lelaure V."/>
            <person name="Mottier S."/>
            <person name="Galibert F."/>
            <person name="Aves S.J."/>
            <person name="Xiang Z."/>
            <person name="Hunt C."/>
            <person name="Moore K."/>
            <person name="Hurst S.M."/>
            <person name="Lucas M."/>
            <person name="Rochet M."/>
            <person name="Gaillardin C."/>
            <person name="Tallada V.A."/>
            <person name="Garzon A."/>
            <person name="Thode G."/>
            <person name="Daga R.R."/>
            <person name="Cruzado L."/>
            <person name="Jimenez J."/>
            <person name="Sanchez M."/>
            <person name="del Rey F."/>
            <person name="Benito J."/>
            <person name="Dominguez A."/>
            <person name="Revuelta J.L."/>
            <person name="Moreno S."/>
            <person name="Armstrong J."/>
            <person name="Forsburg S.L."/>
            <person name="Cerutti L."/>
            <person name="Lowe T."/>
            <person name="McCombie W.R."/>
            <person name="Paulsen I."/>
            <person name="Potashkin J."/>
            <person name="Shpakovski G.V."/>
            <person name="Ussery D."/>
            <person name="Barrell B.G."/>
            <person name="Nurse P."/>
        </authorList>
    </citation>
    <scope>NUCLEOTIDE SEQUENCE [LARGE SCALE GENOMIC DNA]</scope>
    <source>
        <strain>972 / ATCC 24843</strain>
    </source>
</reference>
<reference key="2">
    <citation type="journal article" date="2006" name="Nat. Biotechnol.">
        <title>ORFeome cloning and global analysis of protein localization in the fission yeast Schizosaccharomyces pombe.</title>
        <authorList>
            <person name="Matsuyama A."/>
            <person name="Arai R."/>
            <person name="Yashiroda Y."/>
            <person name="Shirai A."/>
            <person name="Kamata A."/>
            <person name="Sekido S."/>
            <person name="Kobayashi Y."/>
            <person name="Hashimoto A."/>
            <person name="Hamamoto M."/>
            <person name="Hiraoka Y."/>
            <person name="Horinouchi S."/>
            <person name="Yoshida M."/>
        </authorList>
    </citation>
    <scope>SUBCELLULAR LOCATION [LARGE SCALE ANALYSIS]</scope>
</reference>
<feature type="signal peptide" evidence="1">
    <location>
        <begin position="1"/>
        <end position="19"/>
    </location>
</feature>
<feature type="chain" id="PRO_0000303997" description="Uncharacterized protein C777.12c">
    <location>
        <begin position="20"/>
        <end position="238"/>
    </location>
</feature>
<feature type="topological domain" description="Lumenal" evidence="1">
    <location>
        <begin position="20"/>
        <end position="197"/>
    </location>
</feature>
<feature type="transmembrane region" description="Helical" evidence="1">
    <location>
        <begin position="198"/>
        <end position="216"/>
    </location>
</feature>
<feature type="topological domain" description="Cytoplasmic" evidence="1">
    <location>
        <begin position="217"/>
        <end position="238"/>
    </location>
</feature>